<organism>
    <name type="scientific">Homo sapiens</name>
    <name type="common">Human</name>
    <dbReference type="NCBI Taxonomy" id="9606"/>
    <lineage>
        <taxon>Eukaryota</taxon>
        <taxon>Metazoa</taxon>
        <taxon>Chordata</taxon>
        <taxon>Craniata</taxon>
        <taxon>Vertebrata</taxon>
        <taxon>Euteleostomi</taxon>
        <taxon>Mammalia</taxon>
        <taxon>Eutheria</taxon>
        <taxon>Euarchontoglires</taxon>
        <taxon>Primates</taxon>
        <taxon>Haplorrhini</taxon>
        <taxon>Catarrhini</taxon>
        <taxon>Hominidae</taxon>
        <taxon>Homo</taxon>
    </lineage>
</organism>
<accession>Q92889</accession>
<accession>A5PKV6</accession>
<accession>A8K111</accession>
<accession>O00140</accession>
<accession>Q8TD83</accession>
<feature type="chain" id="PRO_0000198853" description="DNA repair endonuclease XPF">
    <location>
        <begin position="1"/>
        <end position="916"/>
    </location>
</feature>
<feature type="domain" description="ERCC4">
    <location>
        <begin position="683"/>
        <end position="763"/>
    </location>
</feature>
<feature type="region of interest" description="Helicase-like" evidence="9">
    <location>
        <begin position="1"/>
        <end position="457"/>
    </location>
</feature>
<feature type="region of interest" description="Leucine-zipper 1" evidence="30">
    <location>
        <begin position="233"/>
        <end position="254"/>
    </location>
</feature>
<feature type="region of interest" description="Leucine-zipper 2" evidence="30">
    <location>
        <begin position="270"/>
        <end position="298"/>
    </location>
</feature>
<feature type="region of interest" description="Disordered" evidence="3">
    <location>
        <begin position="460"/>
        <end position="487"/>
    </location>
</feature>
<feature type="region of interest" description="Disordered" evidence="3">
    <location>
        <begin position="502"/>
        <end position="526"/>
    </location>
</feature>
<feature type="region of interest" description="Nuclease" evidence="9">
    <location>
        <begin position="658"/>
        <end position="813"/>
    </location>
</feature>
<feature type="region of interest" description="Disordered" evidence="3">
    <location>
        <begin position="660"/>
        <end position="679"/>
    </location>
</feature>
<feature type="region of interest" description="HhH2, dimerization with ERCC1" evidence="9">
    <location>
        <begin position="837"/>
        <end position="905"/>
    </location>
</feature>
<feature type="short sequence motif" description="Nuclear localization signal" evidence="2">
    <location>
        <begin position="486"/>
        <end position="491"/>
    </location>
</feature>
<feature type="compositionally biased region" description="Basic and acidic residues" evidence="3">
    <location>
        <begin position="470"/>
        <end position="483"/>
    </location>
</feature>
<feature type="modified residue" description="N6-acetyllysine" evidence="34">
    <location>
        <position position="289"/>
    </location>
</feature>
<feature type="modified residue" description="Phosphoserine" evidence="1">
    <location>
        <position position="521"/>
    </location>
</feature>
<feature type="modified residue" description="Phosphoserine" evidence="1">
    <location>
        <position position="764"/>
    </location>
</feature>
<feature type="modified residue" description="N6-acetyllysine" evidence="20">
    <location>
        <position position="911"/>
    </location>
</feature>
<feature type="cross-link" description="Glycyl lysine isopeptide (Lys-Gly) (interchain with G-Cter in SUMO2)" evidence="35">
    <location>
        <position position="500"/>
    </location>
</feature>
<feature type="splice variant" id="VSP_056341" description="In isoform 2." evidence="26">
    <original>ETKKE</original>
    <variation>GILWG</variation>
    <location>
        <begin position="368"/>
        <end position="372"/>
    </location>
</feature>
<feature type="splice variant" id="VSP_056342" description="In isoform 2." evidence="26">
    <location>
        <begin position="373"/>
        <end position="916"/>
    </location>
</feature>
<feature type="sequence variant" id="VAR_057477" description="In dbSNP:rs34205098.">
    <original>V</original>
    <variation>L</variation>
    <location>
        <position position="33"/>
    </location>
</feature>
<feature type="sequence variant" id="VAR_072084" description="Rare functional variant; causes mild disruption of interstrand cross-link repair activity; partial loss of protein stability; dbSNP:rs145402255." evidence="18">
    <original>R</original>
    <variation>C</variation>
    <location>
        <position position="150"/>
    </location>
</feature>
<feature type="sequence variant" id="VAR_034802" description="In XFEPS; dbSNP:rs121913050." evidence="11">
    <original>R</original>
    <variation>P</variation>
    <location>
        <position position="153"/>
    </location>
</feature>
<feature type="sequence variant" id="VAR_014769" description="In dbSNP:rs2020961." evidence="25">
    <original>A</original>
    <variation>V</variation>
    <location>
        <position position="168"/>
    </location>
</feature>
<feature type="sequence variant" id="VAR_008200" description="In XP-F; dbSNP:rs764731249." evidence="24">
    <original>I</original>
    <variation>M</variation>
    <location>
        <position position="225"/>
    </location>
</feature>
<feature type="sequence variant" id="VAR_070086" description="In FANCQ; dbSNP:rs397509402." evidence="16">
    <original>L</original>
    <variation>P</variation>
    <location>
        <position position="230"/>
    </location>
</feature>
<feature type="sequence variant" id="VAR_070087" description="In XPF/CS; dbSNP:rs397509403." evidence="17">
    <original>C</original>
    <variation>R</variation>
    <location>
        <position position="236"/>
    </location>
</feature>
<feature type="sequence variant" id="VAR_072085" description="In dbSNP:rs143479220." evidence="18">
    <original>R</original>
    <variation>H</variation>
    <location>
        <position position="267"/>
    </location>
</feature>
<feature type="sequence variant" id="VAR_013395" description="In dbSNP:rs1799802." evidence="22 25">
    <original>P</original>
    <variation>S</variation>
    <location>
        <position position="379"/>
    </location>
</feature>
<feature type="sequence variant" id="VAR_013396" description="In dbSNP:rs1800067." evidence="6 8 25">
    <original>R</original>
    <variation>Q</variation>
    <location>
        <position position="415"/>
    </location>
</feature>
<feature type="sequence variant" id="VAR_008201" description="In XP-F." evidence="24">
    <original>R</original>
    <variation>W</variation>
    <location>
        <position position="454"/>
    </location>
</feature>
<feature type="sequence variant" id="VAR_008202" description="In XP-F; dbSNP:rs912480692." evidence="24">
    <original>R</original>
    <variation>Q</variation>
    <location>
        <position position="490"/>
    </location>
</feature>
<feature type="sequence variant" id="VAR_008203" description="In XP-F." evidence="24">
    <original>E</original>
    <variation>K</variation>
    <location>
        <position position="502"/>
    </location>
</feature>
<feature type="sequence variant" id="VAR_008204" description="In XP-F; dbSNP:rs769679311." evidence="24">
    <original>G</original>
    <variation>R</variation>
    <location>
        <position position="513"/>
    </location>
</feature>
<feature type="sequence variant" id="VAR_008205" description="In XP-F." evidence="24">
    <original>I</original>
    <variation>T</variation>
    <location>
        <position position="529"/>
    </location>
</feature>
<feature type="sequence variant" id="VAR_008206" description="In XP-F." evidence="24">
    <original>T</original>
    <variation>A</variation>
    <location>
        <position position="567"/>
    </location>
</feature>
<feature type="sequence variant" id="VAR_013397" description="In dbSNP:rs1800068." evidence="6">
    <original>R</original>
    <variation>T</variation>
    <location>
        <position position="576"/>
    </location>
</feature>
<feature type="sequence variant" id="VAR_070088" description="In XPF/CS; dbSNP:rs147105770." evidence="17">
    <original>R</original>
    <variation>W</variation>
    <location>
        <position position="589"/>
    </location>
</feature>
<feature type="sequence variant" id="VAR_008207" description="In XP-F." evidence="24">
    <location>
        <begin position="605"/>
        <end position="611"/>
    </location>
</feature>
<feature type="sequence variant" id="VAR_013398" description="In XP-F." evidence="24">
    <original>L</original>
    <variation>P</variation>
    <location>
        <position position="608"/>
    </location>
</feature>
<feature type="sequence variant" id="VAR_072086" description="In dbSNP:rs2032331839." evidence="18">
    <original>T</original>
    <variation>A</variation>
    <location>
        <position position="621"/>
    </location>
</feature>
<feature type="sequence variant" id="VAR_014770" description="In dbSNP:rs2020955." evidence="25">
    <original>S</original>
    <variation>P</variation>
    <location>
        <position position="662"/>
    </location>
</feature>
<feature type="sequence variant" id="VAR_070089" description="In FANCQ; disruption of interstrand cross-link repair activity; no effect on protein stability; dbSNP:rs149364215." evidence="16 18">
    <original>R</original>
    <variation>S</variation>
    <location>
        <position position="689"/>
    </location>
</feature>
<feature type="sequence variant" id="VAR_005849" description="In dbSNP:rs774900622." evidence="21">
    <original>G</original>
    <variation>D</variation>
    <location>
        <position position="703"/>
    </location>
</feature>
<feature type="sequence variant" id="VAR_014771" description="In dbSNP:rs1800069." evidence="25">
    <original>I</original>
    <variation>T</variation>
    <location>
        <position position="706"/>
    </location>
</feature>
<feature type="sequence variant" id="VAR_013399" evidence="6">
    <original>I</original>
    <variation>T</variation>
    <location>
        <position position="717"/>
    </location>
</feature>
<feature type="sequence variant" id="VAR_057478" description="In dbSNP:rs12928650.">
    <original>S</original>
    <variation>F</variation>
    <location>
        <position position="768"/>
    </location>
</feature>
<feature type="sequence variant" id="VAR_072087" description="In FANCQ; disruption of interstrand cross-link repair activity; no effect on protein stability; dbSNP:rs1451008479." evidence="18">
    <original>S</original>
    <variation>F</variation>
    <location>
        <position position="786"/>
    </location>
</feature>
<feature type="sequence variant" id="VAR_005850" description="In XP-F; mild; significant residual repair activity; dbSNP:rs121913049." evidence="21 23">
    <original>R</original>
    <variation>W</variation>
    <location>
        <position position="799"/>
    </location>
</feature>
<feature type="sequence variant" id="VAR_057479" description="In dbSNP:rs4986933.">
    <original>A</original>
    <variation>D</variation>
    <location>
        <position position="860"/>
    </location>
</feature>
<feature type="sequence variant" id="VAR_019201" description="In dbSNP:rs2020957." evidence="25">
    <original>I</original>
    <variation>V</variation>
    <location>
        <position position="873"/>
    </location>
</feature>
<feature type="sequence variant" id="VAR_013408" description="In dbSNP:rs1800124." evidence="6 25">
    <original>E</original>
    <variation>G</variation>
    <location>
        <position position="875"/>
    </location>
</feature>
<feature type="sequence variant" id="VAR_014772" description="In dbSNP:rs2020956.">
    <original>G</original>
    <variation>E</variation>
    <location>
        <position position="912"/>
    </location>
</feature>
<feature type="mutagenesis site" description="Mimics acetylation; promoting interaction with ERCC1." evidence="20">
    <original>K</original>
    <variation>Q</variation>
    <location>
        <position position="911"/>
    </location>
</feature>
<feature type="mutagenesis site" description="Abolished acetylation by KAT5, leading to decreased interaction with ERCC1." evidence="20">
    <original>K</original>
    <variation>R</variation>
    <location>
        <position position="911"/>
    </location>
</feature>
<feature type="turn" evidence="38">
    <location>
        <begin position="835"/>
        <end position="837"/>
    </location>
</feature>
<feature type="helix" evidence="36">
    <location>
        <begin position="839"/>
        <end position="842"/>
    </location>
</feature>
<feature type="helix" evidence="37">
    <location>
        <begin position="850"/>
        <end position="853"/>
    </location>
</feature>
<feature type="helix" evidence="37">
    <location>
        <begin position="860"/>
        <end position="869"/>
    </location>
</feature>
<feature type="strand" evidence="39">
    <location>
        <begin position="870"/>
        <end position="872"/>
    </location>
</feature>
<feature type="helix" evidence="37">
    <location>
        <begin position="873"/>
        <end position="877"/>
    </location>
</feature>
<feature type="helix" evidence="37">
    <location>
        <begin position="881"/>
        <end position="888"/>
    </location>
</feature>
<feature type="helix" evidence="37">
    <location>
        <begin position="891"/>
        <end position="902"/>
    </location>
</feature>
<feature type="helix" evidence="36">
    <location>
        <begin position="905"/>
        <end position="908"/>
    </location>
</feature>
<feature type="strand" evidence="36">
    <location>
        <begin position="911"/>
        <end position="913"/>
    </location>
</feature>
<protein>
    <recommendedName>
        <fullName>DNA repair endonuclease XPF</fullName>
        <ecNumber evidence="4">3.1.-.-</ecNumber>
    </recommendedName>
    <alternativeName>
        <fullName evidence="28">DNA excision repair protein ERCC-4</fullName>
    </alternativeName>
    <alternativeName>
        <fullName evidence="27">DNA repair protein complementing XP-F cells</fullName>
    </alternativeName>
    <alternativeName>
        <fullName evidence="27">Xeroderma pigmentosum group F-complementing protein</fullName>
    </alternativeName>
</protein>
<gene>
    <name evidence="28 31" type="primary">ERCC4</name>
    <name type="synonym">ERCC11</name>
    <name evidence="28" type="synonym">XPF</name>
</gene>
<sequence length="916" mass="104486">MESGQPARRIAMAPLLEYERQLVLELLDTDGLVVCARGLGADRLLYHFLQLHCHPACLVLVLNTQPAEEEYFINQLKIEGVEHLPRRVTNEITSNSRYEVYTQGGVIFATSRILVVDFLTDRIPSDLITGILVYRAHRIIESCQEAFILRLFRQKNKRGFIKAFTDNAVAFDTGFCHVERVMRNLFVRKLYLWPRFHVAVNSFLEQHKPEVVEIHVSMTPTMLAIQTAILDILNACLKELKCHNPSLEVEDLSLENAIGKPFDKTIRHYLDPLWHQLGAKTKSLVQDLKILRTLLQYLSQYDCVTFLNLLESLRATEKAFGQNSGWLFLDSSTSMFINARARVYHLPDAKMSKKEKISEKMEIKEGEETKKELVLESNPKWEALTEVLKEIEAENKESEALGGPGQVLICASDDRTCSQLRDYITLGAEAFLLRLYRKTFEKDSKAEEVWMKFRKEDSSKRIRKSHKRPKDPQNKERASTKERTLKKKKRKLTLTQMVGKPEELEEEGDVEEGYRREISSSPESCPEEIKHEEFDVNLSSDAAFGILKEPLTIIHPLLGCSDPYALTRVLHEVEPRYVVLYDAELTFVRQLEIYRASRPGKPLRVYFLIYGGSTEEQRYLTALRKEKEAFEKLIREKASMVVPEEREGRDETNLDLVRGTASADVSTDTRKAGGQEQNGTQQSIVVDMREFRSELPSLIHRRGIDIEPVTLEVGDYILTPEMCVERKSISDLIGSLNNGRLYSQCISMSRYYKRPVLLIEFDPSKPFSLTSRGALFQEISSNDISSKLTLLTLHFPRLRILWCPSPHATAELFEELKQSKPQPDAATALAITADSETLPESEKYNPGPQDFLLKMPGVNAKNCRSLMHHVKNIAELAALSQDELTSILGNAANAKQLYDFIHTSFAEVVSKGKGKK</sequence>
<evidence type="ECO:0000250" key="1">
    <source>
        <dbReference type="UniProtKB" id="Q9QZD4"/>
    </source>
</evidence>
<evidence type="ECO:0000255" key="2"/>
<evidence type="ECO:0000256" key="3">
    <source>
        <dbReference type="SAM" id="MobiDB-lite"/>
    </source>
</evidence>
<evidence type="ECO:0000269" key="4">
    <source>
    </source>
</evidence>
<evidence type="ECO:0000269" key="5">
    <source>
    </source>
</evidence>
<evidence type="ECO:0000269" key="6">
    <source>
    </source>
</evidence>
<evidence type="ECO:0000269" key="7">
    <source>
    </source>
</evidence>
<evidence type="ECO:0000269" key="8">
    <source>
    </source>
</evidence>
<evidence type="ECO:0000269" key="9">
    <source>
    </source>
</evidence>
<evidence type="ECO:0000269" key="10">
    <source>
    </source>
</evidence>
<evidence type="ECO:0000269" key="11">
    <source>
    </source>
</evidence>
<evidence type="ECO:0000269" key="12">
    <source>
    </source>
</evidence>
<evidence type="ECO:0000269" key="13">
    <source>
    </source>
</evidence>
<evidence type="ECO:0000269" key="14">
    <source>
    </source>
</evidence>
<evidence type="ECO:0000269" key="15">
    <source>
    </source>
</evidence>
<evidence type="ECO:0000269" key="16">
    <source>
    </source>
</evidence>
<evidence type="ECO:0000269" key="17">
    <source>
    </source>
</evidence>
<evidence type="ECO:0000269" key="18">
    <source>
    </source>
</evidence>
<evidence type="ECO:0000269" key="19">
    <source>
    </source>
</evidence>
<evidence type="ECO:0000269" key="20">
    <source>
    </source>
</evidence>
<evidence type="ECO:0000269" key="21">
    <source>
    </source>
</evidence>
<evidence type="ECO:0000269" key="22">
    <source>
    </source>
</evidence>
<evidence type="ECO:0000269" key="23">
    <source>
    </source>
</evidence>
<evidence type="ECO:0000269" key="24">
    <source>
    </source>
</evidence>
<evidence type="ECO:0000269" key="25">
    <source ref="2"/>
</evidence>
<evidence type="ECO:0000303" key="26">
    <source>
    </source>
</evidence>
<evidence type="ECO:0000303" key="27">
    <source>
    </source>
</evidence>
<evidence type="ECO:0000303" key="28">
    <source>
    </source>
</evidence>
<evidence type="ECO:0000305" key="29"/>
<evidence type="ECO:0000305" key="30">
    <source>
    </source>
</evidence>
<evidence type="ECO:0000312" key="31">
    <source>
        <dbReference type="HGNC" id="HGNC:3436"/>
    </source>
</evidence>
<evidence type="ECO:0007744" key="32">
    <source>
        <dbReference type="PDB" id="1Z00"/>
    </source>
</evidence>
<evidence type="ECO:0007744" key="33">
    <source>
        <dbReference type="PDB" id="2A1J"/>
    </source>
</evidence>
<evidence type="ECO:0007744" key="34">
    <source>
    </source>
</evidence>
<evidence type="ECO:0007744" key="35">
    <source>
    </source>
</evidence>
<evidence type="ECO:0007829" key="36">
    <source>
        <dbReference type="PDB" id="1Z00"/>
    </source>
</evidence>
<evidence type="ECO:0007829" key="37">
    <source>
        <dbReference type="PDB" id="2A1J"/>
    </source>
</evidence>
<evidence type="ECO:0007829" key="38">
    <source>
        <dbReference type="PDB" id="2AQ0"/>
    </source>
</evidence>
<evidence type="ECO:0007829" key="39">
    <source>
        <dbReference type="PDB" id="2KN7"/>
    </source>
</evidence>
<keyword id="KW-0002">3D-structure</keyword>
<keyword id="KW-0007">Acetylation</keyword>
<keyword id="KW-0025">Alternative splicing</keyword>
<keyword id="KW-0158">Chromosome</keyword>
<keyword id="KW-0172">Cockayne syndrome</keyword>
<keyword id="KW-0225">Disease variant</keyword>
<keyword id="KW-0227">DNA damage</keyword>
<keyword id="KW-0234">DNA repair</keyword>
<keyword id="KW-0238">DNA-binding</keyword>
<keyword id="KW-0242">Dwarfism</keyword>
<keyword id="KW-0255">Endonuclease</keyword>
<keyword id="KW-0923">Fanconi anemia</keyword>
<keyword id="KW-0378">Hydrolase</keyword>
<keyword id="KW-1017">Isopeptide bond</keyword>
<keyword id="KW-0460">Magnesium</keyword>
<keyword id="KW-0540">Nuclease</keyword>
<keyword id="KW-0539">Nucleus</keyword>
<keyword id="KW-0597">Phosphoprotein</keyword>
<keyword id="KW-1267">Proteomics identification</keyword>
<keyword id="KW-1185">Reference proteome</keyword>
<keyword id="KW-0677">Repeat</keyword>
<keyword id="KW-0832">Ubl conjugation</keyword>
<keyword id="KW-0857">Xeroderma pigmentosum</keyword>
<reference key="1">
    <citation type="journal article" date="1996" name="Mol. Cell. Biol.">
        <title>ERCC4 (XPF) encodes a human nucleotide excision repair protein with eukaryotic recombination homologs.</title>
        <authorList>
            <person name="Brookman K.W."/>
            <person name="Lamerdin J.E."/>
            <person name="Thelen M.P."/>
            <person name="Hwang M."/>
            <person name="Reardon J.T."/>
            <person name="Sancar A."/>
            <person name="Zhou Z.-Q."/>
            <person name="Walter C.A."/>
            <person name="Parris C.N."/>
            <person name="Thompson L.H."/>
        </authorList>
    </citation>
    <scope>NUCLEOTIDE SEQUENCE [GENOMIC DNA]</scope>
</reference>
<reference key="2">
    <citation type="submission" date="2002-03" db="EMBL/GenBank/DDBJ databases">
        <authorList>
            <consortium name="NIEHS SNPs program"/>
        </authorList>
    </citation>
    <scope>NUCLEOTIDE SEQUENCE [GENOMIC DNA]</scope>
    <scope>VARIANTS VAL-168; SER-379; GLN-415; PRO-662; THR-706; VAL-873 AND GLY-875</scope>
</reference>
<reference key="3">
    <citation type="journal article" date="2004" name="Nat. Genet.">
        <title>Complete sequencing and characterization of 21,243 full-length human cDNAs.</title>
        <authorList>
            <person name="Ota T."/>
            <person name="Suzuki Y."/>
            <person name="Nishikawa T."/>
            <person name="Otsuki T."/>
            <person name="Sugiyama T."/>
            <person name="Irie R."/>
            <person name="Wakamatsu A."/>
            <person name="Hayashi K."/>
            <person name="Sato H."/>
            <person name="Nagai K."/>
            <person name="Kimura K."/>
            <person name="Makita H."/>
            <person name="Sekine M."/>
            <person name="Obayashi M."/>
            <person name="Nishi T."/>
            <person name="Shibahara T."/>
            <person name="Tanaka T."/>
            <person name="Ishii S."/>
            <person name="Yamamoto J."/>
            <person name="Saito K."/>
            <person name="Kawai Y."/>
            <person name="Isono Y."/>
            <person name="Nakamura Y."/>
            <person name="Nagahari K."/>
            <person name="Murakami K."/>
            <person name="Yasuda T."/>
            <person name="Iwayanagi T."/>
            <person name="Wagatsuma M."/>
            <person name="Shiratori A."/>
            <person name="Sudo H."/>
            <person name="Hosoiri T."/>
            <person name="Kaku Y."/>
            <person name="Kodaira H."/>
            <person name="Kondo H."/>
            <person name="Sugawara M."/>
            <person name="Takahashi M."/>
            <person name="Kanda K."/>
            <person name="Yokoi T."/>
            <person name="Furuya T."/>
            <person name="Kikkawa E."/>
            <person name="Omura Y."/>
            <person name="Abe K."/>
            <person name="Kamihara K."/>
            <person name="Katsuta N."/>
            <person name="Sato K."/>
            <person name="Tanikawa M."/>
            <person name="Yamazaki M."/>
            <person name="Ninomiya K."/>
            <person name="Ishibashi T."/>
            <person name="Yamashita H."/>
            <person name="Murakawa K."/>
            <person name="Fujimori K."/>
            <person name="Tanai H."/>
            <person name="Kimata M."/>
            <person name="Watanabe M."/>
            <person name="Hiraoka S."/>
            <person name="Chiba Y."/>
            <person name="Ishida S."/>
            <person name="Ono Y."/>
            <person name="Takiguchi S."/>
            <person name="Watanabe S."/>
            <person name="Yosida M."/>
            <person name="Hotuta T."/>
            <person name="Kusano J."/>
            <person name="Kanehori K."/>
            <person name="Takahashi-Fujii A."/>
            <person name="Hara H."/>
            <person name="Tanase T.-O."/>
            <person name="Nomura Y."/>
            <person name="Togiya S."/>
            <person name="Komai F."/>
            <person name="Hara R."/>
            <person name="Takeuchi K."/>
            <person name="Arita M."/>
            <person name="Imose N."/>
            <person name="Musashino K."/>
            <person name="Yuuki H."/>
            <person name="Oshima A."/>
            <person name="Sasaki N."/>
            <person name="Aotsuka S."/>
            <person name="Yoshikawa Y."/>
            <person name="Matsunawa H."/>
            <person name="Ichihara T."/>
            <person name="Shiohata N."/>
            <person name="Sano S."/>
            <person name="Moriya S."/>
            <person name="Momiyama H."/>
            <person name="Satoh N."/>
            <person name="Takami S."/>
            <person name="Terashima Y."/>
            <person name="Suzuki O."/>
            <person name="Nakagawa S."/>
            <person name="Senoh A."/>
            <person name="Mizoguchi H."/>
            <person name="Goto Y."/>
            <person name="Shimizu F."/>
            <person name="Wakebe H."/>
            <person name="Hishigaki H."/>
            <person name="Watanabe T."/>
            <person name="Sugiyama A."/>
            <person name="Takemoto M."/>
            <person name="Kawakami B."/>
            <person name="Yamazaki M."/>
            <person name="Watanabe K."/>
            <person name="Kumagai A."/>
            <person name="Itakura S."/>
            <person name="Fukuzumi Y."/>
            <person name="Fujimori Y."/>
            <person name="Komiyama M."/>
            <person name="Tashiro H."/>
            <person name="Tanigami A."/>
            <person name="Fujiwara T."/>
            <person name="Ono T."/>
            <person name="Yamada K."/>
            <person name="Fujii Y."/>
            <person name="Ozaki K."/>
            <person name="Hirao M."/>
            <person name="Ohmori Y."/>
            <person name="Kawabata A."/>
            <person name="Hikiji T."/>
            <person name="Kobatake N."/>
            <person name="Inagaki H."/>
            <person name="Ikema Y."/>
            <person name="Okamoto S."/>
            <person name="Okitani R."/>
            <person name="Kawakami T."/>
            <person name="Noguchi S."/>
            <person name="Itoh T."/>
            <person name="Shigeta K."/>
            <person name="Senba T."/>
            <person name="Matsumura K."/>
            <person name="Nakajima Y."/>
            <person name="Mizuno T."/>
            <person name="Morinaga M."/>
            <person name="Sasaki M."/>
            <person name="Togashi T."/>
            <person name="Oyama M."/>
            <person name="Hata H."/>
            <person name="Watanabe M."/>
            <person name="Komatsu T."/>
            <person name="Mizushima-Sugano J."/>
            <person name="Satoh T."/>
            <person name="Shirai Y."/>
            <person name="Takahashi Y."/>
            <person name="Nakagawa K."/>
            <person name="Okumura K."/>
            <person name="Nagase T."/>
            <person name="Nomura N."/>
            <person name="Kikuchi H."/>
            <person name="Masuho Y."/>
            <person name="Yamashita R."/>
            <person name="Nakai K."/>
            <person name="Yada T."/>
            <person name="Nakamura Y."/>
            <person name="Ohara O."/>
            <person name="Isogai T."/>
            <person name="Sugano S."/>
        </authorList>
    </citation>
    <scope>NUCLEOTIDE SEQUENCE [LARGE SCALE MRNA] (ISOFORM 1)</scope>
    <scope>VARIANT GLN-415</scope>
    <source>
        <tissue>Brain</tissue>
    </source>
</reference>
<reference key="4">
    <citation type="journal article" date="2004" name="Nature">
        <title>The sequence and analysis of duplication-rich human chromosome 16.</title>
        <authorList>
            <person name="Martin J."/>
            <person name="Han C."/>
            <person name="Gordon L.A."/>
            <person name="Terry A."/>
            <person name="Prabhakar S."/>
            <person name="She X."/>
            <person name="Xie G."/>
            <person name="Hellsten U."/>
            <person name="Chan Y.M."/>
            <person name="Altherr M."/>
            <person name="Couronne O."/>
            <person name="Aerts A."/>
            <person name="Bajorek E."/>
            <person name="Black S."/>
            <person name="Blumer H."/>
            <person name="Branscomb E."/>
            <person name="Brown N.C."/>
            <person name="Bruno W.J."/>
            <person name="Buckingham J.M."/>
            <person name="Callen D.F."/>
            <person name="Campbell C.S."/>
            <person name="Campbell M.L."/>
            <person name="Campbell E.W."/>
            <person name="Caoile C."/>
            <person name="Challacombe J.F."/>
            <person name="Chasteen L.A."/>
            <person name="Chertkov O."/>
            <person name="Chi H.C."/>
            <person name="Christensen M."/>
            <person name="Clark L.M."/>
            <person name="Cohn J.D."/>
            <person name="Denys M."/>
            <person name="Detter J.C."/>
            <person name="Dickson M."/>
            <person name="Dimitrijevic-Bussod M."/>
            <person name="Escobar J."/>
            <person name="Fawcett J.J."/>
            <person name="Flowers D."/>
            <person name="Fotopulos D."/>
            <person name="Glavina T."/>
            <person name="Gomez M."/>
            <person name="Gonzales E."/>
            <person name="Goodstein D."/>
            <person name="Goodwin L.A."/>
            <person name="Grady D.L."/>
            <person name="Grigoriev I."/>
            <person name="Groza M."/>
            <person name="Hammon N."/>
            <person name="Hawkins T."/>
            <person name="Haydu L."/>
            <person name="Hildebrand C.E."/>
            <person name="Huang W."/>
            <person name="Israni S."/>
            <person name="Jett J."/>
            <person name="Jewett P.B."/>
            <person name="Kadner K."/>
            <person name="Kimball H."/>
            <person name="Kobayashi A."/>
            <person name="Krawczyk M.-C."/>
            <person name="Leyba T."/>
            <person name="Longmire J.L."/>
            <person name="Lopez F."/>
            <person name="Lou Y."/>
            <person name="Lowry S."/>
            <person name="Ludeman T."/>
            <person name="Manohar C.F."/>
            <person name="Mark G.A."/>
            <person name="McMurray K.L."/>
            <person name="Meincke L.J."/>
            <person name="Morgan J."/>
            <person name="Moyzis R.K."/>
            <person name="Mundt M.O."/>
            <person name="Munk A.C."/>
            <person name="Nandkeshwar R.D."/>
            <person name="Pitluck S."/>
            <person name="Pollard M."/>
            <person name="Predki P."/>
            <person name="Parson-Quintana B."/>
            <person name="Ramirez L."/>
            <person name="Rash S."/>
            <person name="Retterer J."/>
            <person name="Ricke D.O."/>
            <person name="Robinson D.L."/>
            <person name="Rodriguez A."/>
            <person name="Salamov A."/>
            <person name="Saunders E.H."/>
            <person name="Scott D."/>
            <person name="Shough T."/>
            <person name="Stallings R.L."/>
            <person name="Stalvey M."/>
            <person name="Sutherland R.D."/>
            <person name="Tapia R."/>
            <person name="Tesmer J.G."/>
            <person name="Thayer N."/>
            <person name="Thompson L.S."/>
            <person name="Tice H."/>
            <person name="Torney D.C."/>
            <person name="Tran-Gyamfi M."/>
            <person name="Tsai M."/>
            <person name="Ulanovsky L.E."/>
            <person name="Ustaszewska A."/>
            <person name="Vo N."/>
            <person name="White P.S."/>
            <person name="Williams A.L."/>
            <person name="Wills P.L."/>
            <person name="Wu J.-R."/>
            <person name="Wu K."/>
            <person name="Yang J."/>
            <person name="DeJong P."/>
            <person name="Bruce D."/>
            <person name="Doggett N.A."/>
            <person name="Deaven L."/>
            <person name="Schmutz J."/>
            <person name="Grimwood J."/>
            <person name="Richardson P."/>
            <person name="Rokhsar D.S."/>
            <person name="Eichler E.E."/>
            <person name="Gilna P."/>
            <person name="Lucas S.M."/>
            <person name="Myers R.M."/>
            <person name="Rubin E.M."/>
            <person name="Pennacchio L.A."/>
        </authorList>
    </citation>
    <scope>NUCLEOTIDE SEQUENCE [LARGE SCALE GENOMIC DNA]</scope>
</reference>
<reference key="5">
    <citation type="journal article" date="2004" name="Genome Res.">
        <title>The status, quality, and expansion of the NIH full-length cDNA project: the Mammalian Gene Collection (MGC).</title>
        <authorList>
            <consortium name="The MGC Project Team"/>
        </authorList>
    </citation>
    <scope>NUCLEOTIDE SEQUENCE [LARGE SCALE MRNA] (ISOFORM 2)</scope>
</reference>
<reference key="6">
    <citation type="journal article" date="1996" name="Cell">
        <title>Xeroderma pigmentosum group F caused by a defect in a structure-specific DNA repair endonuclease.</title>
        <authorList>
            <person name="Sijbers A.M."/>
            <person name="de Laat W.L."/>
            <person name="Ariza R.R."/>
            <person name="Biggerstaff M."/>
            <person name="Wei Y.-F."/>
            <person name="Moggs J.G."/>
            <person name="Carter K.C."/>
            <person name="Shell B.K."/>
            <person name="Evans E."/>
            <person name="de Jong M.C."/>
            <person name="Rademakers S."/>
            <person name="de Rooij J."/>
            <person name="Jaspers N.G.J."/>
            <person name="Hoeijmakers J.H.J."/>
            <person name="Wood R.D."/>
        </authorList>
    </citation>
    <scope>NUCLEOTIDE SEQUENCE [MRNA] OF 7-916 (ISOFORM 1)</scope>
    <scope>FUNCTION</scope>
    <scope>VARIANT ASP-703</scope>
    <scope>VARIANT XP-F TRP-799</scope>
    <source>
        <tissue>Fibroblast</tissue>
    </source>
</reference>
<reference key="7">
    <citation type="journal article" date="1999" name="Hum. Mutat.">
        <title>A summary of mutations in the UV-sensitive disorders: xeroderma pigmentosum, Cockayne syndrome, and trichothiodystrophy.</title>
        <authorList>
            <person name="Cleaver J.E."/>
            <person name="Thompson L.H."/>
            <person name="Richardson A.S."/>
            <person name="States J.C."/>
        </authorList>
    </citation>
    <scope>REVIEW ON VARIANTS XP-F</scope>
</reference>
<reference key="8">
    <citation type="journal article" date="1999" name="Biochemistry">
        <title>Domain mapping of the DNA binding, endonuclease, and ERCC1 binding properties of the human DNA repair protein XPF.</title>
        <authorList>
            <person name="McCutchen-Maloney S.L."/>
            <person name="Giannecchini C.A."/>
            <person name="Hwang M.H."/>
            <person name="Thelen M.P."/>
        </authorList>
    </citation>
    <scope>FUNCTION</scope>
    <scope>CATALYTIC ACTIVITY</scope>
    <scope>COFACTOR</scope>
    <scope>INTERACTION WITH ERCC1</scope>
</reference>
<reference key="9">
    <citation type="journal article" date="2002" name="Biochemistry">
        <title>Contribution of XPF functional domains to the 5' and 3' incisions produced at the site of a psoralen interstrand cross-link.</title>
        <authorList>
            <person name="Kumaresan K.R."/>
            <person name="Hwang M."/>
            <person name="Thelen M.P."/>
            <person name="Lambert M.W."/>
        </authorList>
    </citation>
    <scope>FUNCTION</scope>
    <scope>SUBCELLULAR LOCATION</scope>
</reference>
<reference key="10">
    <citation type="journal article" date="2009" name="Cell">
        <title>Mammalian BTBD12/SLX4 assembles a Holliday junction resolvase and is required for DNA repair.</title>
        <authorList>
            <person name="Svendsen J.M."/>
            <person name="Smogorzewska A."/>
            <person name="Sowa M.E."/>
            <person name="O'Connell B.C."/>
            <person name="Gygi S.P."/>
            <person name="Elledge S.J."/>
            <person name="Harper J.W."/>
        </authorList>
    </citation>
    <scope>FUNCTION</scope>
    <scope>SUBCELLULAR LOCATION</scope>
    <scope>INTERACTION WITH SLX4</scope>
</reference>
<reference key="11">
    <citation type="journal article" date="2009" name="Cell">
        <title>Human SLX4 is a Holliday junction resolvase subunit that binds multiple DNA repair/recombination endonucleases.</title>
        <authorList>
            <person name="Fekairi S."/>
            <person name="Scaglione S."/>
            <person name="Chahwan C."/>
            <person name="Taylor E.R."/>
            <person name="Tissier A."/>
            <person name="Coulon S."/>
            <person name="Dong M.-Q."/>
            <person name="Ruse C."/>
            <person name="Yates J.R. III"/>
            <person name="Russell P."/>
            <person name="Fuchs R.P."/>
            <person name="McGowan C.H."/>
            <person name="Gaillard P.-H.L."/>
        </authorList>
    </citation>
    <scope>INTERACTION WITH SLX4</scope>
</reference>
<reference key="12">
    <citation type="journal article" date="2009" name="Mol. Cell">
        <title>Coordination of structure-specific nucleases by human SLX4/BTBD12 is required for DNA repair.</title>
        <authorList>
            <person name="Munoz I.M."/>
            <person name="Hain K."/>
            <person name="Declais A.-C."/>
            <person name="Gardiner M."/>
            <person name="Toh G.W."/>
            <person name="Sanchez-Pulido L."/>
            <person name="Heuckmann J.M."/>
            <person name="Toth R."/>
            <person name="Macartney T."/>
            <person name="Eppink B."/>
            <person name="Kanaar R."/>
            <person name="Ponting C.P."/>
            <person name="Lilley D.M.J."/>
            <person name="Rouse J."/>
        </authorList>
    </citation>
    <scope>INTERACTION WITH SLX4</scope>
</reference>
<reference key="13">
    <citation type="journal article" date="2009" name="Mol. Cell">
        <title>Drosophila MUS312 and the vertebrate ortholog BTBD12 interact with DNA structure-specific endonucleases in DNA repair and recombination.</title>
        <authorList>
            <person name="Andersen S.L."/>
            <person name="Bergstralh D.T."/>
            <person name="Kohl K.P."/>
            <person name="LaRocque J.R."/>
            <person name="Moore C.B."/>
            <person name="Sekelsky J."/>
        </authorList>
    </citation>
    <scope>INTERACTION WITH SLX4</scope>
</reference>
<reference key="14">
    <citation type="journal article" date="2009" name="Science">
        <title>Lysine acetylation targets protein complexes and co-regulates major cellular functions.</title>
        <authorList>
            <person name="Choudhary C."/>
            <person name="Kumar C."/>
            <person name="Gnad F."/>
            <person name="Nielsen M.L."/>
            <person name="Rehman M."/>
            <person name="Walther T.C."/>
            <person name="Olsen J.V."/>
            <person name="Mann M."/>
        </authorList>
    </citation>
    <scope>ACETYLATION [LARGE SCALE ANALYSIS] AT LYS-289</scope>
    <scope>IDENTIFICATION BY MASS SPECTROMETRY [LARGE SCALE ANALYSIS]</scope>
</reference>
<reference key="15">
    <citation type="journal article" date="2011" name="BMC Syst. Biol.">
        <title>Initial characterization of the human central proteome.</title>
        <authorList>
            <person name="Burkard T.R."/>
            <person name="Planyavsky M."/>
            <person name="Kaupe I."/>
            <person name="Breitwieser F.P."/>
            <person name="Buerckstuemmer T."/>
            <person name="Bennett K.L."/>
            <person name="Superti-Furga G."/>
            <person name="Colinge J."/>
        </authorList>
    </citation>
    <scope>IDENTIFICATION BY MASS SPECTROMETRY [LARGE SCALE ANALYSIS]</scope>
</reference>
<reference key="16">
    <citation type="journal article" date="2012" name="Proc. Natl. Acad. Sci. U.S.A.">
        <title>N-terminal acetylome analyses and functional insights of the N-terminal acetyltransferase NatB.</title>
        <authorList>
            <person name="Van Damme P."/>
            <person name="Lasa M."/>
            <person name="Polevoda B."/>
            <person name="Gazquez C."/>
            <person name="Elosegui-Artola A."/>
            <person name="Kim D.S."/>
            <person name="De Juan-Pardo E."/>
            <person name="Demeyer K."/>
            <person name="Hole K."/>
            <person name="Larrea E."/>
            <person name="Timmerman E."/>
            <person name="Prieto J."/>
            <person name="Arnesen T."/>
            <person name="Sherman F."/>
            <person name="Gevaert K."/>
            <person name="Aldabe R."/>
        </authorList>
    </citation>
    <scope>IDENTIFICATION BY MASS SPECTROMETRY [LARGE SCALE ANALYSIS]</scope>
</reference>
<reference key="17">
    <citation type="journal article" date="2015" name="EMBO J.">
        <title>USP45 deubiquitylase controls ERCC1-XPF endonuclease-mediated DNA damage responses.</title>
        <authorList>
            <person name="Perez-Oliva A.B."/>
            <person name="Lachaud C."/>
            <person name="Szyniarowski P."/>
            <person name="Munoz I."/>
            <person name="Macartney T."/>
            <person name="Hickson I."/>
            <person name="Rouse J."/>
            <person name="Alessi D.R."/>
        </authorList>
    </citation>
    <scope>INTERACTION WITH ERCC1 AND SLX4</scope>
</reference>
<reference key="18">
    <citation type="journal article" date="2017" name="Nat. Struct. Mol. Biol.">
        <title>Site-specific mapping of the human SUMO proteome reveals co-modification with phosphorylation.</title>
        <authorList>
            <person name="Hendriks I.A."/>
            <person name="Lyon D."/>
            <person name="Young C."/>
            <person name="Jensen L.J."/>
            <person name="Vertegaal A.C."/>
            <person name="Nielsen M.L."/>
        </authorList>
    </citation>
    <scope>SUMOYLATION [LARGE SCALE ANALYSIS] AT LYS-500</scope>
    <scope>IDENTIFICATION BY MASS SPECTROMETRY [LARGE SCALE ANALYSIS]</scope>
</reference>
<reference key="19">
    <citation type="journal article" date="2020" name="Nat. Commun.">
        <title>Acetylation of XPF by TIP60 facilitates XPF-ERCC1 complex assembly and activation.</title>
        <authorList>
            <person name="Wang J."/>
            <person name="He H."/>
            <person name="Chen B."/>
            <person name="Jiang G."/>
            <person name="Cao L."/>
            <person name="Jiang H."/>
            <person name="Zhang G."/>
            <person name="Chen J."/>
            <person name="Huang J."/>
            <person name="Yang B."/>
            <person name="Zhou C."/>
            <person name="Liu T."/>
        </authorList>
    </citation>
    <scope>FUNCTION</scope>
    <scope>INTERACTION WITH ERCC1</scope>
    <scope>ACETYLATION AT LYS-911</scope>
    <scope>MUTAGENESIS OF LYS-911</scope>
</reference>
<reference evidence="33" key="20">
    <citation type="journal article" date="2005" name="Proc. Natl. Acad. Sci. U.S.A.">
        <title>Crystal structure and DNA binding functions of ERCC1, a subunit of the DNA structure-specific endonuclease XPF-ERCC1.</title>
        <authorList>
            <person name="Tsodikov O.V."/>
            <person name="Enzlin J.H."/>
            <person name="Scharer O.D."/>
            <person name="Ellenberger T."/>
        </authorList>
    </citation>
    <scope>X-RAY CRYSTALLOGRAPHY (2.7 ANGSTROMS) OF 848-909 IN COMPLEX WITH ERCC1</scope>
    <scope>DNA-BINDING</scope>
    <scope>DOMAINS</scope>
    <scope>SUBUNIT</scope>
</reference>
<reference evidence="32" key="21">
    <citation type="journal article" date="2005" name="Structure">
        <title>The structure of the human ERCC1/XPF interaction domains reveals a complementary role for the two proteins in nucleotide excision repair.</title>
        <authorList>
            <person name="Tripsianes K."/>
            <person name="Folkers G."/>
            <person name="Ab E."/>
            <person name="Das D."/>
            <person name="Odijk H."/>
            <person name="Jaspers N.G."/>
            <person name="Hoeijmakers J.H."/>
            <person name="Kaptein R."/>
            <person name="Boelens R."/>
        </authorList>
    </citation>
    <scope>STRUCTURE BY NMR OF 834-916 IN COMPLEX WITH ERCC1</scope>
    <scope>SUBUNIT</scope>
</reference>
<reference key="22">
    <citation type="journal article" date="1998" name="Cancer Res.">
        <title>Nonconservative amino acid substitution variants exist at polymorphic frequency in DNA repair genes in healthy humans.</title>
        <authorList>
            <person name="Shen M.R."/>
            <person name="Jones I.M."/>
            <person name="Mohrenweiser H."/>
        </authorList>
    </citation>
    <scope>VARIANT SER-379</scope>
</reference>
<reference key="23">
    <citation type="journal article" date="1998" name="Hum. Mol. Genet.">
        <title>Characterization of molecular defects in Xeroderma pigmentosum group F in relation to its clinically mild symptoms.</title>
        <authorList>
            <person name="Matsumura Y."/>
            <person name="Nishigori C."/>
            <person name="Yagi T."/>
            <person name="Imamura S."/>
            <person name="Takebe H."/>
        </authorList>
    </citation>
    <scope>VARIANTS XP-F MET-225; TRP-454; GLN-490; LYS-502; ARG-513; THR-529; ALA-567; 605-VAL--GLY-611 DEL AND PRO-608</scope>
</reference>
<reference key="24">
    <citation type="journal article" date="1998" name="J. Invest. Dermatol.">
        <title>Homozygous R788W point mutation in the XPF gene of a patient with xeroderma pigmentosum and late-onset neurologic disease.</title>
        <authorList>
            <person name="Sijbers A.M."/>
            <person name="van Voorst Vader P.C."/>
            <person name="Snoek J.W."/>
            <person name="Raams A."/>
            <person name="Jaspers N.G.J."/>
            <person name="Kleijer W.J."/>
        </authorList>
    </citation>
    <scope>VARIANT XP-F TRP-799</scope>
</reference>
<reference key="25">
    <citation type="journal article" date="1999" name="Mutat. Res.">
        <title>Polymorphisms in the human DNA repair gene XPF.</title>
        <authorList>
            <person name="Fan F."/>
            <person name="Liu C."/>
            <person name="Tavare S."/>
            <person name="Arnheim N."/>
        </authorList>
    </citation>
    <scope>VARIANTS GLN-415; THR-576; THR-717 AND GLY-875</scope>
</reference>
<reference key="26">
    <citation type="journal article" date="2006" name="Nature">
        <title>A new progeroid syndrome reveals that genotoxic stress suppresses the somatotroph axis.</title>
        <authorList>
            <person name="Niedernhofer L.J."/>
            <person name="Garinis G.A."/>
            <person name="Raams A."/>
            <person name="Lalai A.S."/>
            <person name="Robinson A.R."/>
            <person name="Appeldoorn E."/>
            <person name="Odijk H."/>
            <person name="Oostendorp R."/>
            <person name="Ahmad A."/>
            <person name="van Leeuwen W."/>
            <person name="Theil A.F."/>
            <person name="Vermeulen W."/>
            <person name="van der Horst G.T.J."/>
            <person name="Meinecke P."/>
            <person name="Kleijer W.J."/>
            <person name="Vijg J."/>
            <person name="Jaspers N.G.J."/>
            <person name="Hoeijmakers J.H.J."/>
        </authorList>
    </citation>
    <scope>VARIANT XFEPS PRO-153</scope>
</reference>
<reference key="27">
    <citation type="journal article" date="2013" name="Am. J. Hum. Genet.">
        <title>Mutations in ERCC4, encoding the DNA-repair endonuclease XPF, cause Fanconi anemia.</title>
        <authorList>
            <person name="Bogliolo M."/>
            <person name="Schuster B."/>
            <person name="Stoepker C."/>
            <person name="Derkunt B."/>
            <person name="Su Y."/>
            <person name="Raams A."/>
            <person name="Trujillo J.P."/>
            <person name="Minguillon J."/>
            <person name="Ramirez M.J."/>
            <person name="Pujol R."/>
            <person name="Casado J.A."/>
            <person name="Banos R."/>
            <person name="Rio P."/>
            <person name="Knies K."/>
            <person name="Zuniga S."/>
            <person name="Benitez J."/>
            <person name="Bueren J.A."/>
            <person name="Jaspers N.G."/>
            <person name="Schaerer O.D."/>
            <person name="de Winter J.P."/>
            <person name="Schindler D."/>
            <person name="Surralles J."/>
        </authorList>
    </citation>
    <scope>VARIANTS FANCQ PRO-230 AND SER-689</scope>
</reference>
<reference key="28">
    <citation type="journal article" date="2013" name="Am. J. Hum. Genet.">
        <title>Malfunction of nuclease ERCC1-XPF results in diverse clinical manifestations and causes Cockayne syndrome, xeroderma pigmentosum, and Fanconi anemia.</title>
        <authorList>
            <person name="Kashiyama K."/>
            <person name="Nakazawa Y."/>
            <person name="Pilz D.T."/>
            <person name="Guo C."/>
            <person name="Shimada M."/>
            <person name="Sasaki K."/>
            <person name="Fawcett H."/>
            <person name="Wing J.F."/>
            <person name="Lewin S.O."/>
            <person name="Carr L."/>
            <person name="Li T.S."/>
            <person name="Yoshiura K."/>
            <person name="Utani A."/>
            <person name="Hirano A."/>
            <person name="Yamashita S."/>
            <person name="Greenblatt D."/>
            <person name="Nardo T."/>
            <person name="Stefanini M."/>
            <person name="McGibbon D."/>
            <person name="Sarkany R."/>
            <person name="Fassihi H."/>
            <person name="Takahashi Y."/>
            <person name="Nagayama Y."/>
            <person name="Mitsutake N."/>
            <person name="Lehmann A.R."/>
            <person name="Ogi T."/>
        </authorList>
    </citation>
    <scope>VARIANTS XPF/CS ARG-236 AND TRP-589</scope>
</reference>
<reference key="29">
    <citation type="journal article" date="2013" name="Hum. Mutat.">
        <title>Evaluation of rare variants in the new fanconi anemia gene ERCC4 (FANCQ) as familial breast/ovarian cancer susceptibility alleles.</title>
        <authorList>
            <person name="Osorio A."/>
            <person name="Bogliolo M."/>
            <person name="Fernandez V."/>
            <person name="Barroso A."/>
            <person name="de la Hoya M."/>
            <person name="Caldes T."/>
            <person name="Lasa A."/>
            <person name="Ramon y Cajal T."/>
            <person name="Santamarina M."/>
            <person name="Vega A."/>
            <person name="Quiles F."/>
            <person name="Lazaro C."/>
            <person name="Diez O."/>
            <person name="Fernandez D."/>
            <person name="Gonzalez-Sarmiento R."/>
            <person name="Duran M."/>
            <person name="Piqueras J.F."/>
            <person name="Marin M."/>
            <person name="Pujol R."/>
            <person name="Surralles J."/>
            <person name="Benitez J."/>
        </authorList>
    </citation>
    <scope>VARIANTS CYS-150; HIS-267 AND ALA-621</scope>
    <scope>VARIANTS FANCQ SER-689 AND PHE-786</scope>
    <scope>CHARACTERIZATION OF VARIANT CYS-150</scope>
    <scope>CHARACTERIZATION OF VARIANTS FANCQ SER-689 AND PHE-786</scope>
    <scope>FUNCTION</scope>
</reference>
<comment type="function">
    <text evidence="4 7 14 18 20 21">Catalytic component of a structure-specific DNA repair endonuclease responsible for the 5-prime incision during DNA repair, and which is essential for nucleotide excision repair (NER) and interstrand cross-link (ICL) repair.</text>
</comment>
<comment type="cofactor">
    <cofactor evidence="4">
        <name>Mg(2+)</name>
        <dbReference type="ChEBI" id="CHEBI:18420"/>
    </cofactor>
</comment>
<comment type="subunit">
    <text evidence="4 9 10 12 13 14 15 19 20">Heterodimer composed of ERCC1 and ERCC4/XPF (PubMed:10413517, PubMed:16076955, PubMed:16338413, PubMed:25538220, PubMed:32034146). Interacts with SLX4/BTBD12; this interaction is direct and links the ERCC1-ERCC4/XPF complex to SLX4, which may coordinate the action of the structure-specific endonuclease during DNA repair (PubMed:19595721, PubMed:19595722, PubMed:19596235, PubMed:19596236, PubMed:25538220).</text>
</comment>
<comment type="interaction">
    <interactant intactId="EBI-2370770">
        <id>Q92889</id>
    </interactant>
    <interactant intactId="EBI-12809220">
        <id>Q5SWW7</id>
        <label>C10orf55</label>
    </interactant>
    <organismsDiffer>false</organismsDiffer>
    <experiments>2</experiments>
</comment>
<comment type="interaction">
    <interactant intactId="EBI-2370770">
        <id>Q92889</id>
    </interactant>
    <interactant intactId="EBI-750962">
        <id>P07992</id>
        <label>ERCC1</label>
    </interactant>
    <organismsDiffer>false</organismsDiffer>
    <experiments>14</experiments>
</comment>
<comment type="interaction">
    <interactant intactId="EBI-2370770">
        <id>Q92889</id>
    </interactant>
    <interactant intactId="EBI-2370770">
        <id>Q92889</id>
        <label>ERCC4</label>
    </interactant>
    <organismsDiffer>false</organismsDiffer>
    <experiments>2</experiments>
</comment>
<comment type="interaction">
    <interactant intactId="EBI-2370770">
        <id>Q92889</id>
    </interactant>
    <interactant intactId="EBI-2370740">
        <id>Q8IY92</id>
        <label>SLX4</label>
    </interactant>
    <organismsDiffer>false</organismsDiffer>
    <experiments>11</experiments>
</comment>
<comment type="interaction">
    <interactant intactId="EBI-2370770">
        <id>Q92889</id>
    </interactant>
    <interactant intactId="EBI-12007872">
        <id>O75410-7</id>
        <label>TACC1</label>
    </interactant>
    <organismsDiffer>false</organismsDiffer>
    <experiments>3</experiments>
</comment>
<comment type="subcellular location">
    <subcellularLocation>
        <location evidence="14">Nucleus</location>
    </subcellularLocation>
    <subcellularLocation>
        <location evidence="7">Chromosome</location>
    </subcellularLocation>
    <text evidence="7">Localizes to sites of DNA damage.</text>
</comment>
<comment type="alternative products">
    <event type="alternative splicing"/>
    <isoform>
        <id>Q92889-1</id>
        <name>1</name>
        <sequence type="displayed"/>
    </isoform>
    <isoform>
        <id>Q92889-2</id>
        <name>2</name>
        <sequence type="described" ref="VSP_056341 VSP_056342"/>
    </isoform>
</comment>
<comment type="PTM">
    <text evidence="20">Acetylation at Lys-911 by KAT5 promotes interaction with ERCC1 by disrupting a salt bridge between Glu-907 and Lys-911, thereby exposing a second binding site for ERCC1 (PubMed:32034146). Deacetylated by SIRT1 (PubMed:32034146).</text>
</comment>
<comment type="disease" evidence="5 21 23 24">
    <disease id="DI-01160">
        <name>Xeroderma pigmentosum complementation group F</name>
        <acronym>XP-F</acronym>
        <description>An autosomal recessive pigmentary skin disorder characterized by solar hypersensitivity of the skin, high predisposition for developing cancers on areas exposed to sunlight and, in some cases, neurological abnormalities. The skin develops marked freckling and other pigmentation abnormalities. XP-F patients show a mild phenotype.</description>
        <dbReference type="MIM" id="278760"/>
    </disease>
    <text>The disease is caused by variants affecting the gene represented in this entry.</text>
</comment>
<comment type="disease" evidence="11">
    <disease id="DI-02464">
        <name>XFE progeroid syndrome</name>
        <acronym>XFEPS</acronym>
        <description>A syndrome characterized by aged bird-like facies, lack of subcutaneous fat, dwarfism, cachexia and microcephaly. Additional features include sun-sensitivity from birth, learning disabilities, hearing loss, and visual impairment.</description>
        <dbReference type="MIM" id="610965"/>
    </disease>
    <text>The disease is caused by variants affecting the gene represented in this entry.</text>
</comment>
<comment type="disease" evidence="17">
    <disease id="DI-03805">
        <name>Xeroderma pigmentosum type F/Cockayne syndrome</name>
        <acronym>XPF/CS</acronym>
        <description>A variant form of Cockayne syndrome, a disorder characterized by growth retardation, microcephaly, impairment of nervous system development, pigmentary retinopathy, peculiar facies, and progeria together with abnormal skin photosensitivity. Cockayne syndrome dermatological features are milder than those in xeroderma pigmentosum and skin cancers are not found in affected individuals. XPF/CS patients, however, present with severe skin phenotypes, including severe photosensitivity, abnormal skin pigmentation, and skin cancer predisposition.</description>
        <dbReference type="MIM" id="278760"/>
    </disease>
    <text>The disease is caused by variants affecting the gene represented in this entry.</text>
</comment>
<comment type="disease" evidence="16 18">
    <disease id="DI-03812">
        <name>Fanconi anemia complementation group Q</name>
        <acronym>FANCQ</acronym>
        <description>A disorder affecting all bone marrow elements and resulting in anemia, leukopenia and thrombopenia. It is associated with cardiac, renal and limb malformations, dermal pigmentary changes, and a predisposition to the development of malignancies. At the cellular level it is associated with hypersensitivity to DNA-damaging agents, chromosomal instability (increased chromosome breakage) and defective DNA repair.</description>
        <dbReference type="MIM" id="615272"/>
    </disease>
    <text>The disease is caused by variants affecting the gene represented in this entry.</text>
</comment>
<comment type="similarity">
    <text evidence="29">Belongs to the XPF family.</text>
</comment>
<comment type="sequence caution" evidence="29">
    <conflict type="erroneous initiation">
        <sequence resource="EMBL-CDS" id="AAB07689"/>
    </conflict>
    <text>Truncated N-terminus.</text>
</comment>
<comment type="online information" name="Atlas of Genetics and Cytogenetics in Oncology and Haematology">
    <link uri="https://atlasgeneticsoncology.org/gene/299/XPF"/>
</comment>
<name>XPF_HUMAN</name>
<dbReference type="EC" id="3.1.-.-" evidence="4"/>
<dbReference type="EMBL" id="L77890">
    <property type="protein sequence ID" value="AAB50174.1"/>
    <property type="molecule type" value="Genomic_DNA"/>
</dbReference>
<dbReference type="EMBL" id="AF491814">
    <property type="protein sequence ID" value="AAL91593.1"/>
    <property type="molecule type" value="Genomic_DNA"/>
</dbReference>
<dbReference type="EMBL" id="AK289726">
    <property type="protein sequence ID" value="BAF82415.1"/>
    <property type="molecule type" value="mRNA"/>
</dbReference>
<dbReference type="EMBL" id="AC010401">
    <property type="status" value="NOT_ANNOTATED_CDS"/>
    <property type="molecule type" value="Genomic_DNA"/>
</dbReference>
<dbReference type="EMBL" id="BC142631">
    <property type="protein sequence ID" value="AAI42632.1"/>
    <property type="molecule type" value="mRNA"/>
</dbReference>
<dbReference type="EMBL" id="U64315">
    <property type="protein sequence ID" value="AAB07689.1"/>
    <property type="status" value="ALT_INIT"/>
    <property type="molecule type" value="mRNA"/>
</dbReference>
<dbReference type="CCDS" id="CCDS32390.1">
    <molecule id="Q92889-1"/>
</dbReference>
<dbReference type="RefSeq" id="NP_005227.1">
    <molecule id="Q92889-1"/>
    <property type="nucleotide sequence ID" value="NM_005236.3"/>
</dbReference>
<dbReference type="PDB" id="1Z00">
    <property type="method" value="NMR"/>
    <property type="chains" value="B=834-916"/>
</dbReference>
<dbReference type="PDB" id="2A1J">
    <property type="method" value="X-ray"/>
    <property type="resolution" value="2.70 A"/>
    <property type="chains" value="A=848-909"/>
</dbReference>
<dbReference type="PDB" id="2AQ0">
    <property type="method" value="NMR"/>
    <property type="chains" value="A/B=834-916"/>
</dbReference>
<dbReference type="PDB" id="2KN7">
    <property type="method" value="NMR"/>
    <property type="chains" value="A/D=842-908"/>
</dbReference>
<dbReference type="PDB" id="2MUT">
    <property type="method" value="NMR"/>
    <property type="chains" value="B=834-916"/>
</dbReference>
<dbReference type="PDB" id="6SXA">
    <property type="method" value="EM"/>
    <property type="resolution" value="3.60 A"/>
    <property type="chains" value="F=1-916"/>
</dbReference>
<dbReference type="PDB" id="6SXB">
    <property type="method" value="EM"/>
    <property type="resolution" value="7.90 A"/>
    <property type="chains" value="F=1-916"/>
</dbReference>
<dbReference type="PDBsum" id="1Z00"/>
<dbReference type="PDBsum" id="2A1J"/>
<dbReference type="PDBsum" id="2AQ0"/>
<dbReference type="PDBsum" id="2KN7"/>
<dbReference type="PDBsum" id="2MUT"/>
<dbReference type="PDBsum" id="6SXA"/>
<dbReference type="PDBsum" id="6SXB"/>
<dbReference type="BMRB" id="Q92889"/>
<dbReference type="EMDB" id="EMD-10337"/>
<dbReference type="EMDB" id="EMD-10338"/>
<dbReference type="SMR" id="Q92889"/>
<dbReference type="BioGRID" id="108384">
    <property type="interactions" value="290"/>
</dbReference>
<dbReference type="ComplexPortal" id="CPX-478">
    <property type="entry name" value="ERCC1-XPF endonuclease complex"/>
</dbReference>
<dbReference type="CORUM" id="Q92889"/>
<dbReference type="DIP" id="DIP-42006N"/>
<dbReference type="FunCoup" id="Q92889">
    <property type="interactions" value="3642"/>
</dbReference>
<dbReference type="IntAct" id="Q92889">
    <property type="interactions" value="54"/>
</dbReference>
<dbReference type="MINT" id="Q92889"/>
<dbReference type="STRING" id="9606.ENSP00000310520"/>
<dbReference type="BindingDB" id="Q92889"/>
<dbReference type="ChEMBL" id="CHEMBL3883316"/>
<dbReference type="GlyGen" id="Q92889">
    <property type="glycosylation" value="1 site, 1 O-linked glycan (1 site)"/>
</dbReference>
<dbReference type="iPTMnet" id="Q92889"/>
<dbReference type="MetOSite" id="Q92889"/>
<dbReference type="PhosphoSitePlus" id="Q92889"/>
<dbReference type="BioMuta" id="ERCC4"/>
<dbReference type="DMDM" id="229463004"/>
<dbReference type="jPOST" id="Q92889"/>
<dbReference type="MassIVE" id="Q92889"/>
<dbReference type="PaxDb" id="9606-ENSP00000310520"/>
<dbReference type="PeptideAtlas" id="Q92889"/>
<dbReference type="ProteomicsDB" id="722"/>
<dbReference type="ProteomicsDB" id="75575">
    <molecule id="Q92889-1"/>
</dbReference>
<dbReference type="Pumba" id="Q92889"/>
<dbReference type="Antibodypedia" id="24811">
    <property type="antibodies" value="549 antibodies from 32 providers"/>
</dbReference>
<dbReference type="DNASU" id="2072"/>
<dbReference type="Ensembl" id="ENST00000311895.8">
    <molecule id="Q92889-1"/>
    <property type="protein sequence ID" value="ENSP00000310520.7"/>
    <property type="gene ID" value="ENSG00000175595.16"/>
</dbReference>
<dbReference type="Ensembl" id="ENST00000575156.5">
    <molecule id="Q92889-2"/>
    <property type="protein sequence ID" value="ENSP00000459933.1"/>
    <property type="gene ID" value="ENSG00000175595.16"/>
</dbReference>
<dbReference type="GeneID" id="2072"/>
<dbReference type="KEGG" id="hsa:2072"/>
<dbReference type="MANE-Select" id="ENST00000311895.8">
    <property type="protein sequence ID" value="ENSP00000310520.7"/>
    <property type="RefSeq nucleotide sequence ID" value="NM_005236.3"/>
    <property type="RefSeq protein sequence ID" value="NP_005227.1"/>
</dbReference>
<dbReference type="UCSC" id="uc002dce.3">
    <molecule id="Q92889-1"/>
    <property type="organism name" value="human"/>
</dbReference>
<dbReference type="AGR" id="HGNC:3436"/>
<dbReference type="CTD" id="2072"/>
<dbReference type="DisGeNET" id="2072"/>
<dbReference type="GeneCards" id="ERCC4"/>
<dbReference type="GeneReviews" id="ERCC4"/>
<dbReference type="HGNC" id="HGNC:3436">
    <property type="gene designation" value="ERCC4"/>
</dbReference>
<dbReference type="HPA" id="ENSG00000175595">
    <property type="expression patterns" value="Tissue enhanced (skeletal)"/>
</dbReference>
<dbReference type="MalaCards" id="ERCC4"/>
<dbReference type="MIM" id="133520">
    <property type="type" value="gene"/>
</dbReference>
<dbReference type="MIM" id="278760">
    <property type="type" value="phenotype"/>
</dbReference>
<dbReference type="MIM" id="610965">
    <property type="type" value="phenotype"/>
</dbReference>
<dbReference type="MIM" id="615272">
    <property type="type" value="phenotype"/>
</dbReference>
<dbReference type="neXtProt" id="NX_Q92889"/>
<dbReference type="OpenTargets" id="ENSG00000175595"/>
<dbReference type="Orphanet" id="90321">
    <property type="disease" value="Cockayne syndrome type 1"/>
</dbReference>
<dbReference type="Orphanet" id="84">
    <property type="disease" value="Fanconi anemia"/>
</dbReference>
<dbReference type="Orphanet" id="910">
    <property type="disease" value="Xeroderma pigmentosum"/>
</dbReference>
<dbReference type="Orphanet" id="220295">
    <property type="disease" value="Xeroderma pigmentosum-Cockayne syndrome complex"/>
</dbReference>
<dbReference type="PharmGKB" id="PA27850"/>
<dbReference type="VEuPathDB" id="HostDB:ENSG00000175595"/>
<dbReference type="eggNOG" id="KOG0442">
    <property type="taxonomic scope" value="Eukaryota"/>
</dbReference>
<dbReference type="GeneTree" id="ENSGT00390000004394"/>
<dbReference type="HOGENOM" id="CLU_002265_0_0_1"/>
<dbReference type="InParanoid" id="Q92889"/>
<dbReference type="OMA" id="THILDIM"/>
<dbReference type="OrthoDB" id="361020at2759"/>
<dbReference type="PAN-GO" id="Q92889">
    <property type="GO annotations" value="8 GO annotations based on evolutionary models"/>
</dbReference>
<dbReference type="PhylomeDB" id="Q92889"/>
<dbReference type="TreeFam" id="TF101234"/>
<dbReference type="PathwayCommons" id="Q92889"/>
<dbReference type="Reactome" id="R-HSA-5685938">
    <property type="pathway name" value="HDR through Single Strand Annealing (SSA)"/>
</dbReference>
<dbReference type="Reactome" id="R-HSA-5696395">
    <property type="pathway name" value="Formation of Incision Complex in GG-NER"/>
</dbReference>
<dbReference type="Reactome" id="R-HSA-5696400">
    <property type="pathway name" value="Dual Incision in GG-NER"/>
</dbReference>
<dbReference type="Reactome" id="R-HSA-6782135">
    <property type="pathway name" value="Dual incision in TC-NER"/>
</dbReference>
<dbReference type="Reactome" id="R-HSA-6783310">
    <property type="pathway name" value="Fanconi Anemia Pathway"/>
</dbReference>
<dbReference type="SignaLink" id="Q92889"/>
<dbReference type="SIGNOR" id="Q92889"/>
<dbReference type="BioGRID-ORCS" id="2072">
    <property type="hits" value="119 hits in 1164 CRISPR screens"/>
</dbReference>
<dbReference type="EvolutionaryTrace" id="Q92889"/>
<dbReference type="GeneWiki" id="ERCC4"/>
<dbReference type="GenomeRNAi" id="2072"/>
<dbReference type="Pharos" id="Q92889">
    <property type="development level" value="Tbio"/>
</dbReference>
<dbReference type="PRO" id="PR:Q92889"/>
<dbReference type="Proteomes" id="UP000005640">
    <property type="component" value="Chromosome 16"/>
</dbReference>
<dbReference type="RNAct" id="Q92889">
    <property type="molecule type" value="protein"/>
</dbReference>
<dbReference type="Bgee" id="ENSG00000175595">
    <property type="expression patterns" value="Expressed in male germ line stem cell (sensu Vertebrata) in testis and 158 other cell types or tissues"/>
</dbReference>
<dbReference type="ExpressionAtlas" id="Q92889">
    <property type="expression patterns" value="baseline and differential"/>
</dbReference>
<dbReference type="GO" id="GO:0000781">
    <property type="term" value="C:chromosome, telomeric region"/>
    <property type="evidence" value="ECO:0000314"/>
    <property type="project" value="UniProtKB"/>
</dbReference>
<dbReference type="GO" id="GO:0070522">
    <property type="term" value="C:ERCC4-ERCC1 complex"/>
    <property type="evidence" value="ECO:0000314"/>
    <property type="project" value="UniProtKB"/>
</dbReference>
<dbReference type="GO" id="GO:0005654">
    <property type="term" value="C:nucleoplasm"/>
    <property type="evidence" value="ECO:0000304"/>
    <property type="project" value="Reactome"/>
</dbReference>
<dbReference type="GO" id="GO:0000109">
    <property type="term" value="C:nucleotide-excision repair complex"/>
    <property type="evidence" value="ECO:0000314"/>
    <property type="project" value="MGI"/>
</dbReference>
<dbReference type="GO" id="GO:0000110">
    <property type="term" value="C:nucleotide-excision repair factor 1 complex"/>
    <property type="evidence" value="ECO:0000314"/>
    <property type="project" value="UniProtKB"/>
</dbReference>
<dbReference type="GO" id="GO:0005634">
    <property type="term" value="C:nucleus"/>
    <property type="evidence" value="ECO:0000314"/>
    <property type="project" value="UniProtKB"/>
</dbReference>
<dbReference type="GO" id="GO:0003684">
    <property type="term" value="F:damaged DNA binding"/>
    <property type="evidence" value="ECO:0000315"/>
    <property type="project" value="UniProtKB"/>
</dbReference>
<dbReference type="GO" id="GO:0004520">
    <property type="term" value="F:DNA endonuclease activity"/>
    <property type="evidence" value="ECO:0000314"/>
    <property type="project" value="UniProtKB"/>
</dbReference>
<dbReference type="GO" id="GO:0042802">
    <property type="term" value="F:identical protein binding"/>
    <property type="evidence" value="ECO:0000353"/>
    <property type="project" value="IntAct"/>
</dbReference>
<dbReference type="GO" id="GO:1990841">
    <property type="term" value="F:promoter-specific chromatin binding"/>
    <property type="evidence" value="ECO:0007669"/>
    <property type="project" value="Ensembl"/>
</dbReference>
<dbReference type="GO" id="GO:0003697">
    <property type="term" value="F:single-stranded DNA binding"/>
    <property type="evidence" value="ECO:0000314"/>
    <property type="project" value="UniProtKB"/>
</dbReference>
<dbReference type="GO" id="GO:0000014">
    <property type="term" value="F:single-stranded DNA endodeoxyribonuclease activity"/>
    <property type="evidence" value="ECO:0000318"/>
    <property type="project" value="GO_Central"/>
</dbReference>
<dbReference type="GO" id="GO:0001094">
    <property type="term" value="F:TFIID-class transcription factor complex binding"/>
    <property type="evidence" value="ECO:0007669"/>
    <property type="project" value="Ensembl"/>
</dbReference>
<dbReference type="GO" id="GO:0034644">
    <property type="term" value="P:cellular response to UV"/>
    <property type="evidence" value="ECO:0000314"/>
    <property type="project" value="UniProtKB"/>
</dbReference>
<dbReference type="GO" id="GO:0006281">
    <property type="term" value="P:DNA repair"/>
    <property type="evidence" value="ECO:0000315"/>
    <property type="project" value="UniProtKB"/>
</dbReference>
<dbReference type="GO" id="GO:0000724">
    <property type="term" value="P:double-strand break repair via homologous recombination"/>
    <property type="evidence" value="ECO:0000315"/>
    <property type="project" value="UniProtKB"/>
</dbReference>
<dbReference type="GO" id="GO:0006303">
    <property type="term" value="P:double-strand break repair via nonhomologous end joining"/>
    <property type="evidence" value="ECO:0000315"/>
    <property type="project" value="BHF-UCL"/>
</dbReference>
<dbReference type="GO" id="GO:1905765">
    <property type="term" value="P:negative regulation of protection from non-homologous end joining at telomere"/>
    <property type="evidence" value="ECO:0000315"/>
    <property type="project" value="BHF-UCL"/>
</dbReference>
<dbReference type="GO" id="GO:0032205">
    <property type="term" value="P:negative regulation of telomere maintenance"/>
    <property type="evidence" value="ECO:0000315"/>
    <property type="project" value="UniProtKB"/>
</dbReference>
<dbReference type="GO" id="GO:1904357">
    <property type="term" value="P:negative regulation of telomere maintenance via telomere lengthening"/>
    <property type="evidence" value="ECO:0000314"/>
    <property type="project" value="BHF-UCL"/>
</dbReference>
<dbReference type="GO" id="GO:0006289">
    <property type="term" value="P:nucleotide-excision repair"/>
    <property type="evidence" value="ECO:0000314"/>
    <property type="project" value="UniProtKB"/>
</dbReference>
<dbReference type="GO" id="GO:1901255">
    <property type="term" value="P:nucleotide-excision repair involved in interstrand cross-link repair"/>
    <property type="evidence" value="ECO:0000314"/>
    <property type="project" value="UniProtKB"/>
</dbReference>
<dbReference type="GO" id="GO:0010506">
    <property type="term" value="P:regulation of autophagy"/>
    <property type="evidence" value="ECO:0007669"/>
    <property type="project" value="Ensembl"/>
</dbReference>
<dbReference type="GO" id="GO:0000712">
    <property type="term" value="P:resolution of meiotic recombination intermediates"/>
    <property type="evidence" value="ECO:0000318"/>
    <property type="project" value="GO_Central"/>
</dbReference>
<dbReference type="GO" id="GO:0009411">
    <property type="term" value="P:response to UV"/>
    <property type="evidence" value="ECO:0000315"/>
    <property type="project" value="UniProtKB"/>
</dbReference>
<dbReference type="GO" id="GO:0000723">
    <property type="term" value="P:telomere maintenance"/>
    <property type="evidence" value="ECO:0000315"/>
    <property type="project" value="BHF-UCL"/>
</dbReference>
<dbReference type="GO" id="GO:0061819">
    <property type="term" value="P:telomeric DNA-containing double minutes formation"/>
    <property type="evidence" value="ECO:0000315"/>
    <property type="project" value="BHF-UCL"/>
</dbReference>
<dbReference type="GO" id="GO:0009650">
    <property type="term" value="P:UV protection"/>
    <property type="evidence" value="ECO:0007669"/>
    <property type="project" value="Ensembl"/>
</dbReference>
<dbReference type="CDD" id="cd20078">
    <property type="entry name" value="XPF_nuclease_XPF_euk"/>
    <property type="match status" value="1"/>
</dbReference>
<dbReference type="FunFam" id="3.40.50.10130:FF:000002">
    <property type="entry name" value="DNA repair endonuclease XPF"/>
    <property type="match status" value="1"/>
</dbReference>
<dbReference type="FunFam" id="1.10.150.20:FF:000040">
    <property type="entry name" value="DNA repair endonuclease XPF isoform X2"/>
    <property type="match status" value="1"/>
</dbReference>
<dbReference type="Gene3D" id="3.40.50.10130">
    <property type="match status" value="1"/>
</dbReference>
<dbReference type="Gene3D" id="1.10.150.20">
    <property type="entry name" value="5' to 3' exonuclease, C-terminal subdomain"/>
    <property type="match status" value="1"/>
</dbReference>
<dbReference type="InterPro" id="IPR006166">
    <property type="entry name" value="ERCC4_domain"/>
</dbReference>
<dbReference type="InterPro" id="IPR011335">
    <property type="entry name" value="Restrct_endonuc-II-like"/>
</dbReference>
<dbReference type="InterPro" id="IPR010994">
    <property type="entry name" value="RuvA_2-like"/>
</dbReference>
<dbReference type="InterPro" id="IPR006167">
    <property type="entry name" value="XPF"/>
</dbReference>
<dbReference type="InterPro" id="IPR047520">
    <property type="entry name" value="XPF_nuclease"/>
</dbReference>
<dbReference type="NCBIfam" id="TIGR00596">
    <property type="entry name" value="rad1"/>
    <property type="match status" value="1"/>
</dbReference>
<dbReference type="PANTHER" id="PTHR10150">
    <property type="entry name" value="DNA REPAIR ENDONUCLEASE XPF"/>
    <property type="match status" value="1"/>
</dbReference>
<dbReference type="PANTHER" id="PTHR10150:SF0">
    <property type="entry name" value="DNA REPAIR ENDONUCLEASE XPF"/>
    <property type="match status" value="1"/>
</dbReference>
<dbReference type="Pfam" id="PF02732">
    <property type="entry name" value="ERCC4"/>
    <property type="match status" value="1"/>
</dbReference>
<dbReference type="SMART" id="SM00891">
    <property type="entry name" value="ERCC4"/>
    <property type="match status" value="1"/>
</dbReference>
<dbReference type="SUPFAM" id="SSF52980">
    <property type="entry name" value="Restriction endonuclease-like"/>
    <property type="match status" value="1"/>
</dbReference>
<dbReference type="SUPFAM" id="SSF47781">
    <property type="entry name" value="RuvA domain 2-like"/>
    <property type="match status" value="1"/>
</dbReference>
<proteinExistence type="evidence at protein level"/>